<name>WASF2_HUMAN</name>
<comment type="function">
    <text evidence="4 7">Downstream effector molecule involved in the transmission of signals from tyrosine kinase receptors and small GTPases to the actin cytoskeleton. Promotes formation of actin filaments. Part of the WAVE complex that regulates lamellipodia formation. The WAVE complex regulates actin filament reorganization via its interaction with the Arp2/3 complex.</text>
</comment>
<comment type="subunit">
    <text evidence="4 5 6 7 8 9 10">Binds actin and the Arp2/3 complex. Interacts with BAIAP2. Component of the WAVE2 complex composed of ABI1, CYFIP1/SRA1, NCKAP1/NAP1 (NCKAP1l/HEM1 in hematopoietic cells) and WASF2/WAVE2 (PubMed:16417406). Directly interacts with BRK1. Interacts with FNBP1L (via the SH3 domain) (PubMed:19798448).</text>
</comment>
<comment type="subunit">
    <text evidence="11">(Microbial infection) Interacts with human cytomegalovirus protein UL135.</text>
</comment>
<comment type="interaction">
    <interactant intactId="EBI-4290615">
        <id>Q9Y6W5</id>
    </interactant>
    <interactant intactId="EBI-375543">
        <id>P00519</id>
        <label>ABL1</label>
    </interactant>
    <organismsDiffer>false</organismsDiffer>
    <experiments>2</experiments>
</comment>
<comment type="interaction">
    <interactant intactId="EBI-4290615">
        <id>Q9Y6W5</id>
    </interactant>
    <interactant intactId="EBI-6174091">
        <id>Q9UQB8-4</id>
        <label>BAIAP2</label>
    </interactant>
    <organismsDiffer>false</organismsDiffer>
    <experiments>5</experiments>
</comment>
<comment type="interaction">
    <interactant intactId="EBI-4290615">
        <id>Q9Y6W5</id>
    </interactant>
    <interactant intactId="EBI-1222956">
        <id>O60504-2</id>
        <label>SORBS3</label>
    </interactant>
    <organismsDiffer>false</organismsDiffer>
    <experiments>3</experiments>
</comment>
<comment type="interaction">
    <interactant intactId="EBI-4290615">
        <id>Q9Y6W5</id>
    </interactant>
    <interactant intactId="EBI-5235340">
        <id>Q7Z699</id>
        <label>SPRED1</label>
    </interactant>
    <organismsDiffer>false</organismsDiffer>
    <experiments>3</experiments>
</comment>
<comment type="interaction">
    <interactant intactId="EBI-4290615">
        <id>Q9Y6W5</id>
    </interactant>
    <interactant intactId="EBI-524753">
        <id>Q8IUH5</id>
        <label>ZDHHC17</label>
    </interactant>
    <organismsDiffer>false</organismsDiffer>
    <experiments>2</experiments>
</comment>
<comment type="subcellular location">
    <subcellularLocation>
        <location evidence="1">Cytoplasm</location>
        <location evidence="1">Cytoskeleton</location>
    </subcellularLocation>
    <subcellularLocation>
        <location evidence="1">Cell projection</location>
        <location evidence="1">Lamellipodium</location>
    </subcellularLocation>
    <subcellularLocation>
        <location evidence="12">Basolateral cell membrane</location>
    </subcellularLocation>
    <text evidence="1">At the interface between the lamellipodial actin meshwork and the membrane.</text>
</comment>
<comment type="alternative products">
    <event type="alternative splicing"/>
    <isoform>
        <id>Q9Y6W5-1</id>
        <name>1</name>
        <sequence type="displayed"/>
    </isoform>
    <isoform>
        <id>Q9Y6W5-2</id>
        <name>2</name>
        <sequence type="described" ref="VSP_042514 VSP_042515"/>
    </isoform>
</comment>
<comment type="tissue specificity">
    <text evidence="4">Expressed in all tissues with strongest expression in placenta, lung, and peripheral blood leukocytes, but not in skeletal muscle.</text>
</comment>
<comment type="domain">
    <text evidence="4 7">Binds and activates the Arp2/3 complex via the C-terminal domain. Interacts with actin via the WH2 domain.</text>
</comment>
<comment type="similarity">
    <text evidence="14">Belongs to the SCAR/WAVE family.</text>
</comment>
<evidence type="ECO:0000250" key="1"/>
<evidence type="ECO:0000255" key="2">
    <source>
        <dbReference type="PROSITE-ProRule" id="PRU00406"/>
    </source>
</evidence>
<evidence type="ECO:0000256" key="3">
    <source>
        <dbReference type="SAM" id="MobiDB-lite"/>
    </source>
</evidence>
<evidence type="ECO:0000269" key="4">
    <source>
    </source>
</evidence>
<evidence type="ECO:0000269" key="5">
    <source>
    </source>
</evidence>
<evidence type="ECO:0000269" key="6">
    <source>
    </source>
</evidence>
<evidence type="ECO:0000269" key="7">
    <source>
    </source>
</evidence>
<evidence type="ECO:0000269" key="8">
    <source>
    </source>
</evidence>
<evidence type="ECO:0000269" key="9">
    <source>
    </source>
</evidence>
<evidence type="ECO:0000269" key="10">
    <source>
    </source>
</evidence>
<evidence type="ECO:0000269" key="11">
    <source>
    </source>
</evidence>
<evidence type="ECO:0000269" key="12">
    <source>
    </source>
</evidence>
<evidence type="ECO:0000303" key="13">
    <source>
    </source>
</evidence>
<evidence type="ECO:0000305" key="14"/>
<evidence type="ECO:0000312" key="15">
    <source>
        <dbReference type="HGNC" id="HGNC:12733"/>
    </source>
</evidence>
<evidence type="ECO:0007744" key="16">
    <source>
    </source>
</evidence>
<evidence type="ECO:0007829" key="17">
    <source>
        <dbReference type="PDB" id="2A40"/>
    </source>
</evidence>
<protein>
    <recommendedName>
        <fullName evidence="14">Actin-binding protein WASF2</fullName>
    </recommendedName>
    <alternativeName>
        <fullName>Protein WAVE-2</fullName>
    </alternativeName>
    <alternativeName>
        <fullName>Verprolin homology domain-containing protein 2</fullName>
    </alternativeName>
    <alternativeName>
        <fullName>Wiskott-Aldrich syndrome protein family member 2</fullName>
        <shortName>WASP family protein member 2</shortName>
    </alternativeName>
</protein>
<sequence>MPLVTRNIEPRHLCRQTLPSVRSELECVTNITLANVIRQLGSLSKYAEDIFGELFTQANTFASRVSSLAERVDRLQVKVTQLDPKEEEVSLQGINTRKAFRSSTIQDQKLFDRNSLPVPVLETYNTCDTPPPLNNLTPYRDDGKEALKFYTDPSYFFDLWKEKMLQDTKDIMKEKRKHRKEKKDNPNRGNVNPRKIKTRKEEWEKMKMGQEFVESKEKLGTSGYPPTLVYQNGSIGCVENVDASSYPPPPQSDSASSPSPSFSEDNLPPPPAEFSYPVDNQRGSGLAGPKRSSVVSPSHPPPAPPLGSPPGPKPGFAPPPAPPPPPPPMIGIPPPPPPVGFGSPGTPPPPSPPSFPPHPDFAAPPPPPPPPAADYPTLPPPPLSQPTGGAPPPPPPPPPPGPPPPPFTGADGQPAIPPPLSDTTKPKSSLPAVSDARSDLLSAIRQGFQLRRVEEQREQEKRDVVGNDVATILSRRIAVEYSDSEDDSSEFDEDDWSD</sequence>
<keyword id="KW-0002">3D-structure</keyword>
<keyword id="KW-0009">Actin-binding</keyword>
<keyword id="KW-0025">Alternative splicing</keyword>
<keyword id="KW-1003">Cell membrane</keyword>
<keyword id="KW-0966">Cell projection</keyword>
<keyword id="KW-0963">Cytoplasm</keyword>
<keyword id="KW-0206">Cytoskeleton</keyword>
<keyword id="KW-0945">Host-virus interaction</keyword>
<keyword id="KW-0472">Membrane</keyword>
<keyword id="KW-0597">Phosphoprotein</keyword>
<keyword id="KW-1267">Proteomics identification</keyword>
<keyword id="KW-1185">Reference proteome</keyword>
<reference key="1">
    <citation type="journal article" date="1999" name="Biochem. Biophys. Res. Commun.">
        <title>Identification of two human WAVE/SCAR homologues as general actin regulatory molecules which associate with the Arp2/3 complex.</title>
        <authorList>
            <person name="Suetsugu S."/>
            <person name="Miki H."/>
            <person name="Takenawa T."/>
        </authorList>
    </citation>
    <scope>NUCLEOTIDE SEQUENCE [MRNA] (ISOFORM 1)</scope>
    <scope>FUNCTION</scope>
    <scope>INTERACTION WITH ACTIN AND THE ARP2/3 COMPLEX</scope>
    <scope>SUBUNIT</scope>
    <scope>DOMAIN</scope>
    <scope>TISSUE SPECIFICITY</scope>
    <source>
        <tissue>T-cell lymphoma</tissue>
    </source>
</reference>
<reference key="2">
    <citation type="journal article" date="2004" name="Nat. Genet.">
        <title>Complete sequencing and characterization of 21,243 full-length human cDNAs.</title>
        <authorList>
            <person name="Ota T."/>
            <person name="Suzuki Y."/>
            <person name="Nishikawa T."/>
            <person name="Otsuki T."/>
            <person name="Sugiyama T."/>
            <person name="Irie R."/>
            <person name="Wakamatsu A."/>
            <person name="Hayashi K."/>
            <person name="Sato H."/>
            <person name="Nagai K."/>
            <person name="Kimura K."/>
            <person name="Makita H."/>
            <person name="Sekine M."/>
            <person name="Obayashi M."/>
            <person name="Nishi T."/>
            <person name="Shibahara T."/>
            <person name="Tanaka T."/>
            <person name="Ishii S."/>
            <person name="Yamamoto J."/>
            <person name="Saito K."/>
            <person name="Kawai Y."/>
            <person name="Isono Y."/>
            <person name="Nakamura Y."/>
            <person name="Nagahari K."/>
            <person name="Murakami K."/>
            <person name="Yasuda T."/>
            <person name="Iwayanagi T."/>
            <person name="Wagatsuma M."/>
            <person name="Shiratori A."/>
            <person name="Sudo H."/>
            <person name="Hosoiri T."/>
            <person name="Kaku Y."/>
            <person name="Kodaira H."/>
            <person name="Kondo H."/>
            <person name="Sugawara M."/>
            <person name="Takahashi M."/>
            <person name="Kanda K."/>
            <person name="Yokoi T."/>
            <person name="Furuya T."/>
            <person name="Kikkawa E."/>
            <person name="Omura Y."/>
            <person name="Abe K."/>
            <person name="Kamihara K."/>
            <person name="Katsuta N."/>
            <person name="Sato K."/>
            <person name="Tanikawa M."/>
            <person name="Yamazaki M."/>
            <person name="Ninomiya K."/>
            <person name="Ishibashi T."/>
            <person name="Yamashita H."/>
            <person name="Murakawa K."/>
            <person name="Fujimori K."/>
            <person name="Tanai H."/>
            <person name="Kimata M."/>
            <person name="Watanabe M."/>
            <person name="Hiraoka S."/>
            <person name="Chiba Y."/>
            <person name="Ishida S."/>
            <person name="Ono Y."/>
            <person name="Takiguchi S."/>
            <person name="Watanabe S."/>
            <person name="Yosida M."/>
            <person name="Hotuta T."/>
            <person name="Kusano J."/>
            <person name="Kanehori K."/>
            <person name="Takahashi-Fujii A."/>
            <person name="Hara H."/>
            <person name="Tanase T.-O."/>
            <person name="Nomura Y."/>
            <person name="Togiya S."/>
            <person name="Komai F."/>
            <person name="Hara R."/>
            <person name="Takeuchi K."/>
            <person name="Arita M."/>
            <person name="Imose N."/>
            <person name="Musashino K."/>
            <person name="Yuuki H."/>
            <person name="Oshima A."/>
            <person name="Sasaki N."/>
            <person name="Aotsuka S."/>
            <person name="Yoshikawa Y."/>
            <person name="Matsunawa H."/>
            <person name="Ichihara T."/>
            <person name="Shiohata N."/>
            <person name="Sano S."/>
            <person name="Moriya S."/>
            <person name="Momiyama H."/>
            <person name="Satoh N."/>
            <person name="Takami S."/>
            <person name="Terashima Y."/>
            <person name="Suzuki O."/>
            <person name="Nakagawa S."/>
            <person name="Senoh A."/>
            <person name="Mizoguchi H."/>
            <person name="Goto Y."/>
            <person name="Shimizu F."/>
            <person name="Wakebe H."/>
            <person name="Hishigaki H."/>
            <person name="Watanabe T."/>
            <person name="Sugiyama A."/>
            <person name="Takemoto M."/>
            <person name="Kawakami B."/>
            <person name="Yamazaki M."/>
            <person name="Watanabe K."/>
            <person name="Kumagai A."/>
            <person name="Itakura S."/>
            <person name="Fukuzumi Y."/>
            <person name="Fujimori Y."/>
            <person name="Komiyama M."/>
            <person name="Tashiro H."/>
            <person name="Tanigami A."/>
            <person name="Fujiwara T."/>
            <person name="Ono T."/>
            <person name="Yamada K."/>
            <person name="Fujii Y."/>
            <person name="Ozaki K."/>
            <person name="Hirao M."/>
            <person name="Ohmori Y."/>
            <person name="Kawabata A."/>
            <person name="Hikiji T."/>
            <person name="Kobatake N."/>
            <person name="Inagaki H."/>
            <person name="Ikema Y."/>
            <person name="Okamoto S."/>
            <person name="Okitani R."/>
            <person name="Kawakami T."/>
            <person name="Noguchi S."/>
            <person name="Itoh T."/>
            <person name="Shigeta K."/>
            <person name="Senba T."/>
            <person name="Matsumura K."/>
            <person name="Nakajima Y."/>
            <person name="Mizuno T."/>
            <person name="Morinaga M."/>
            <person name="Sasaki M."/>
            <person name="Togashi T."/>
            <person name="Oyama M."/>
            <person name="Hata H."/>
            <person name="Watanabe M."/>
            <person name="Komatsu T."/>
            <person name="Mizushima-Sugano J."/>
            <person name="Satoh T."/>
            <person name="Shirai Y."/>
            <person name="Takahashi Y."/>
            <person name="Nakagawa K."/>
            <person name="Okumura K."/>
            <person name="Nagase T."/>
            <person name="Nomura N."/>
            <person name="Kikuchi H."/>
            <person name="Masuho Y."/>
            <person name="Yamashita R."/>
            <person name="Nakai K."/>
            <person name="Yada T."/>
            <person name="Nakamura Y."/>
            <person name="Ohara O."/>
            <person name="Isogai T."/>
            <person name="Sugano S."/>
        </authorList>
    </citation>
    <scope>NUCLEOTIDE SEQUENCE [LARGE SCALE MRNA] (ISOFORM 2)</scope>
    <source>
        <tissue>Testis</tissue>
    </source>
</reference>
<reference key="3">
    <citation type="journal article" date="2006" name="Nature">
        <title>The DNA sequence and biological annotation of human chromosome 1.</title>
        <authorList>
            <person name="Gregory S.G."/>
            <person name="Barlow K.F."/>
            <person name="McLay K.E."/>
            <person name="Kaul R."/>
            <person name="Swarbreck D."/>
            <person name="Dunham A."/>
            <person name="Scott C.E."/>
            <person name="Howe K.L."/>
            <person name="Woodfine K."/>
            <person name="Spencer C.C.A."/>
            <person name="Jones M.C."/>
            <person name="Gillson C."/>
            <person name="Searle S."/>
            <person name="Zhou Y."/>
            <person name="Kokocinski F."/>
            <person name="McDonald L."/>
            <person name="Evans R."/>
            <person name="Phillips K."/>
            <person name="Atkinson A."/>
            <person name="Cooper R."/>
            <person name="Jones C."/>
            <person name="Hall R.E."/>
            <person name="Andrews T.D."/>
            <person name="Lloyd C."/>
            <person name="Ainscough R."/>
            <person name="Almeida J.P."/>
            <person name="Ambrose K.D."/>
            <person name="Anderson F."/>
            <person name="Andrew R.W."/>
            <person name="Ashwell R.I.S."/>
            <person name="Aubin K."/>
            <person name="Babbage A.K."/>
            <person name="Bagguley C.L."/>
            <person name="Bailey J."/>
            <person name="Beasley H."/>
            <person name="Bethel G."/>
            <person name="Bird C.P."/>
            <person name="Bray-Allen S."/>
            <person name="Brown J.Y."/>
            <person name="Brown A.J."/>
            <person name="Buckley D."/>
            <person name="Burton J."/>
            <person name="Bye J."/>
            <person name="Carder C."/>
            <person name="Chapman J.C."/>
            <person name="Clark S.Y."/>
            <person name="Clarke G."/>
            <person name="Clee C."/>
            <person name="Cobley V."/>
            <person name="Collier R.E."/>
            <person name="Corby N."/>
            <person name="Coville G.J."/>
            <person name="Davies J."/>
            <person name="Deadman R."/>
            <person name="Dunn M."/>
            <person name="Earthrowl M."/>
            <person name="Ellington A.G."/>
            <person name="Errington H."/>
            <person name="Frankish A."/>
            <person name="Frankland J."/>
            <person name="French L."/>
            <person name="Garner P."/>
            <person name="Garnett J."/>
            <person name="Gay L."/>
            <person name="Ghori M.R.J."/>
            <person name="Gibson R."/>
            <person name="Gilby L.M."/>
            <person name="Gillett W."/>
            <person name="Glithero R.J."/>
            <person name="Grafham D.V."/>
            <person name="Griffiths C."/>
            <person name="Griffiths-Jones S."/>
            <person name="Grocock R."/>
            <person name="Hammond S."/>
            <person name="Harrison E.S.I."/>
            <person name="Hart E."/>
            <person name="Haugen E."/>
            <person name="Heath P.D."/>
            <person name="Holmes S."/>
            <person name="Holt K."/>
            <person name="Howden P.J."/>
            <person name="Hunt A.R."/>
            <person name="Hunt S.E."/>
            <person name="Hunter G."/>
            <person name="Isherwood J."/>
            <person name="James R."/>
            <person name="Johnson C."/>
            <person name="Johnson D."/>
            <person name="Joy A."/>
            <person name="Kay M."/>
            <person name="Kershaw J.K."/>
            <person name="Kibukawa M."/>
            <person name="Kimberley A.M."/>
            <person name="King A."/>
            <person name="Knights A.J."/>
            <person name="Lad H."/>
            <person name="Laird G."/>
            <person name="Lawlor S."/>
            <person name="Leongamornlert D.A."/>
            <person name="Lloyd D.M."/>
            <person name="Loveland J."/>
            <person name="Lovell J."/>
            <person name="Lush M.J."/>
            <person name="Lyne R."/>
            <person name="Martin S."/>
            <person name="Mashreghi-Mohammadi M."/>
            <person name="Matthews L."/>
            <person name="Matthews N.S.W."/>
            <person name="McLaren S."/>
            <person name="Milne S."/>
            <person name="Mistry S."/>
            <person name="Moore M.J.F."/>
            <person name="Nickerson T."/>
            <person name="O'Dell C.N."/>
            <person name="Oliver K."/>
            <person name="Palmeiri A."/>
            <person name="Palmer S.A."/>
            <person name="Parker A."/>
            <person name="Patel D."/>
            <person name="Pearce A.V."/>
            <person name="Peck A.I."/>
            <person name="Pelan S."/>
            <person name="Phelps K."/>
            <person name="Phillimore B.J."/>
            <person name="Plumb R."/>
            <person name="Rajan J."/>
            <person name="Raymond C."/>
            <person name="Rouse G."/>
            <person name="Saenphimmachak C."/>
            <person name="Sehra H.K."/>
            <person name="Sheridan E."/>
            <person name="Shownkeen R."/>
            <person name="Sims S."/>
            <person name="Skuce C.D."/>
            <person name="Smith M."/>
            <person name="Steward C."/>
            <person name="Subramanian S."/>
            <person name="Sycamore N."/>
            <person name="Tracey A."/>
            <person name="Tromans A."/>
            <person name="Van Helmond Z."/>
            <person name="Wall M."/>
            <person name="Wallis J.M."/>
            <person name="White S."/>
            <person name="Whitehead S.L."/>
            <person name="Wilkinson J.E."/>
            <person name="Willey D.L."/>
            <person name="Williams H."/>
            <person name="Wilming L."/>
            <person name="Wray P.W."/>
            <person name="Wu Z."/>
            <person name="Coulson A."/>
            <person name="Vaudin M."/>
            <person name="Sulston J.E."/>
            <person name="Durbin R.M."/>
            <person name="Hubbard T."/>
            <person name="Wooster R."/>
            <person name="Dunham I."/>
            <person name="Carter N.P."/>
            <person name="McVean G."/>
            <person name="Ross M.T."/>
            <person name="Harrow J."/>
            <person name="Olson M.V."/>
            <person name="Beck S."/>
            <person name="Rogers J."/>
            <person name="Bentley D.R."/>
        </authorList>
    </citation>
    <scope>NUCLEOTIDE SEQUENCE [LARGE SCALE GENOMIC DNA]</scope>
</reference>
<reference key="4">
    <citation type="journal article" date="2004" name="Genome Res.">
        <title>The status, quality, and expansion of the NIH full-length cDNA project: the Mammalian Gene Collection (MGC).</title>
        <authorList>
            <consortium name="The MGC Project Team"/>
        </authorList>
    </citation>
    <scope>NUCLEOTIDE SEQUENCE [LARGE SCALE MRNA] (ISOFORM 1)</scope>
    <source>
        <tissue>Lymph</tissue>
    </source>
</reference>
<reference key="5">
    <citation type="journal article" date="2000" name="Nature">
        <title>IRSp53 is an essential intermediate between Rac and WAVE in the regulation of membrane ruffling.</title>
        <authorList>
            <person name="Miki H."/>
            <person name="Yamaguchi H."/>
            <person name="Suetsugu S."/>
            <person name="Takenawa T."/>
        </authorList>
    </citation>
    <scope>INTERACTION WITH BAIAP2</scope>
</reference>
<reference key="6">
    <citation type="journal article" date="2004" name="Proc. Natl. Acad. Sci. U.S.A.">
        <title>Purification and architecture of the ubiquitous Wave complex.</title>
        <authorList>
            <person name="Gautreau A."/>
            <person name="Ho H.-Y."/>
            <person name="Li J."/>
            <person name="Steen H."/>
            <person name="Gygi S.P."/>
            <person name="Kirschner M.W."/>
        </authorList>
    </citation>
    <scope>INTERACTION WITH C3ORF10</scope>
</reference>
<reference key="7">
    <citation type="journal article" date="2006" name="PLoS Biol.">
        <title>Hem-1 complexes are essential for Rac activation, actin polymerization, and myosin regulation during neutrophil chemotaxis.</title>
        <authorList>
            <person name="Weiner O.D."/>
            <person name="Rentel M.C."/>
            <person name="Ott A."/>
            <person name="Brown G.E."/>
            <person name="Jedrychowski M."/>
            <person name="Yaffe M.B."/>
            <person name="Gygi S.P."/>
            <person name="Cantley L.C."/>
            <person name="Bourne H.R."/>
            <person name="Kirschner M.W."/>
        </authorList>
    </citation>
    <scope>IDENTIFICATION IN THE WAVE2 COMPLEX</scope>
</reference>
<reference key="8">
    <citation type="journal article" date="2009" name="PLoS Genet.">
        <title>Requirements for F-BAR proteins TOCA-1 and TOCA-2 in actin dynamics and membrane trafficking during Caenorhabditis elegans oocyte growth and embryonic epidermal morphogenesis.</title>
        <authorList>
            <person name="Giuliani C."/>
            <person name="Troglio F."/>
            <person name="Bai Z."/>
            <person name="Patel F.B."/>
            <person name="Zucconi A."/>
            <person name="Malabarba M.G."/>
            <person name="Disanza A."/>
            <person name="Stradal T.B."/>
            <person name="Cassata G."/>
            <person name="Confalonieri S."/>
            <person name="Hardin J.D."/>
            <person name="Soto M.C."/>
            <person name="Grant B.D."/>
            <person name="Scita G."/>
        </authorList>
    </citation>
    <scope>INTERACTION WITH FNBP1L</scope>
</reference>
<reference key="9">
    <citation type="journal article" date="2010" name="Nature">
        <title>Structure and control of the actin regulatory WAVE complex.</title>
        <authorList>
            <person name="Chen Z."/>
            <person name="Borek D."/>
            <person name="Padrick S.B."/>
            <person name="Gomez T.S."/>
            <person name="Metlagel Z."/>
            <person name="Ismail A.M."/>
            <person name="Umetani J."/>
            <person name="Billadeau D.D."/>
            <person name="Otwinowski Z."/>
            <person name="Rosen M.K."/>
        </authorList>
    </citation>
    <scope>MUTAGENESIS OF LEU-40; ILE-50; PHE-51 AND LEU-54</scope>
    <scope>SUBUNIT</scope>
</reference>
<reference key="10">
    <citation type="journal article" date="2011" name="BMC Syst. Biol.">
        <title>Initial characterization of the human central proteome.</title>
        <authorList>
            <person name="Burkard T.R."/>
            <person name="Planyavsky M."/>
            <person name="Kaupe I."/>
            <person name="Breitwieser F.P."/>
            <person name="Buerckstuemmer T."/>
            <person name="Bennett K.L."/>
            <person name="Superti-Furga G."/>
            <person name="Colinge J."/>
        </authorList>
    </citation>
    <scope>IDENTIFICATION BY MASS SPECTROMETRY [LARGE SCALE ANALYSIS]</scope>
</reference>
<reference key="11">
    <citation type="journal article" date="2013" name="J. Proteome Res.">
        <title>Toward a comprehensive characterization of a human cancer cell phosphoproteome.</title>
        <authorList>
            <person name="Zhou H."/>
            <person name="Di Palma S."/>
            <person name="Preisinger C."/>
            <person name="Peng M."/>
            <person name="Polat A.N."/>
            <person name="Heck A.J."/>
            <person name="Mohammed S."/>
        </authorList>
    </citation>
    <scope>PHOSPHORYLATION [LARGE SCALE ANALYSIS] AT SER-474</scope>
    <scope>IDENTIFICATION BY MASS SPECTROMETRY [LARGE SCALE ANALYSIS]</scope>
    <source>
        <tissue>Erythroleukemia</tissue>
    </source>
</reference>
<reference key="12">
    <citation type="journal article" date="2014" name="Cell Host Microbe">
        <title>HCMV pUL135 remodels the actin cytoskeleton to impair immune recognition of infected cells.</title>
        <authorList>
            <person name="Stanton R.J."/>
            <person name="Prod'homme V."/>
            <person name="Purbhoo M.A."/>
            <person name="Moore M."/>
            <person name="Aicheler R.J."/>
            <person name="Heinzmann M."/>
            <person name="Bailer S.M."/>
            <person name="Haas J."/>
            <person name="Antrobus R."/>
            <person name="Weekes M.P."/>
            <person name="Lehner P.J."/>
            <person name="Vojtesek B."/>
            <person name="Miners K.L."/>
            <person name="Man S."/>
            <person name="Wilkie G.S."/>
            <person name="Davison A.J."/>
            <person name="Wang E.C."/>
            <person name="Tomasec P."/>
            <person name="Wilkinson G.W."/>
        </authorList>
    </citation>
    <scope>INTERACTION WITH HUMAN CYTOMEGALOVIRUS PROTEIN UL135 (MICROBIAL INFECTION)</scope>
</reference>
<reference key="13">
    <citation type="journal article" date="2014" name="J. Proteomics">
        <title>An enzyme assisted RP-RPLC approach for in-depth analysis of human liver phosphoproteome.</title>
        <authorList>
            <person name="Bian Y."/>
            <person name="Song C."/>
            <person name="Cheng K."/>
            <person name="Dong M."/>
            <person name="Wang F."/>
            <person name="Huang J."/>
            <person name="Sun D."/>
            <person name="Wang L."/>
            <person name="Ye M."/>
            <person name="Zou H."/>
        </authorList>
    </citation>
    <scope>IDENTIFICATION BY MASS SPECTROMETRY [LARGE SCALE ANALYSIS]</scope>
    <source>
        <tissue>Liver</tissue>
    </source>
</reference>
<reference key="14">
    <citation type="journal article" date="2018" name="Nat. Cell Biol.">
        <title>Fam49/CYRI interacts with Rac1 and locally suppresses protrusions.</title>
        <authorList>
            <person name="Fort L."/>
            <person name="Batista J.M."/>
            <person name="Thomason P.A."/>
            <person name="Spence H.J."/>
            <person name="Whitelaw J.A."/>
            <person name="Tweedy L."/>
            <person name="Greaves J."/>
            <person name="Martin K.J."/>
            <person name="Anderson K.I."/>
            <person name="Brown P."/>
            <person name="Lilla S."/>
            <person name="Neilson M.P."/>
            <person name="Tafelmeyer P."/>
            <person name="Zanivan S."/>
            <person name="Ismail S."/>
            <person name="Bryant D.M."/>
            <person name="Tomkinson N.C.O."/>
            <person name="Chamberlain L.H."/>
            <person name="Mastick G.S."/>
            <person name="Insall R.H."/>
            <person name="Machesky L.M."/>
        </authorList>
    </citation>
    <scope>SUBCELLULAR LOCATION</scope>
</reference>
<reference key="15">
    <citation type="journal article" date="2005" name="Proc. Natl. Acad. Sci. U.S.A.">
        <title>Actin-bound structures of Wiskott-Aldrich syndrome protein (WASP)-homology domain 2 and the implications for filament assembly.</title>
        <authorList>
            <person name="Chereau D."/>
            <person name="Kerff F."/>
            <person name="Graceffa P."/>
            <person name="Grabarek Z."/>
            <person name="Langsetmo K."/>
            <person name="Dominguez R."/>
        </authorList>
    </citation>
    <scope>X-RAY CRYSTALLOGRAPHY (1.8 ANGSTROMS) OF 433-464 IN COMPLEX WITH ACTIN</scope>
    <scope>FUNCTION</scope>
    <scope>DOMAIN</scope>
    <scope>MUTAGENESIS OF TYR-124; TYR-150 AND 160-TRP-LYS-161</scope>
    <scope>SUBUNIT</scope>
</reference>
<proteinExistence type="evidence at protein level"/>
<organism>
    <name type="scientific">Homo sapiens</name>
    <name type="common">Human</name>
    <dbReference type="NCBI Taxonomy" id="9606"/>
    <lineage>
        <taxon>Eukaryota</taxon>
        <taxon>Metazoa</taxon>
        <taxon>Chordata</taxon>
        <taxon>Craniata</taxon>
        <taxon>Vertebrata</taxon>
        <taxon>Euteleostomi</taxon>
        <taxon>Mammalia</taxon>
        <taxon>Eutheria</taxon>
        <taxon>Euarchontoglires</taxon>
        <taxon>Primates</taxon>
        <taxon>Haplorrhini</taxon>
        <taxon>Catarrhini</taxon>
        <taxon>Hominidae</taxon>
        <taxon>Homo</taxon>
    </lineage>
</organism>
<feature type="chain" id="PRO_0000188994" description="Actin-binding protein WASF2">
    <location>
        <begin position="1"/>
        <end position="498"/>
    </location>
</feature>
<feature type="domain" description="WH2" evidence="2">
    <location>
        <begin position="436"/>
        <end position="453"/>
    </location>
</feature>
<feature type="region of interest" description="Disordered" evidence="3">
    <location>
        <begin position="173"/>
        <end position="203"/>
    </location>
</feature>
<feature type="region of interest" description="Disordered" evidence="3">
    <location>
        <begin position="240"/>
        <end position="435"/>
    </location>
</feature>
<feature type="compositionally biased region" description="Low complexity" evidence="3">
    <location>
        <begin position="252"/>
        <end position="263"/>
    </location>
</feature>
<feature type="compositionally biased region" description="Pro residues" evidence="3">
    <location>
        <begin position="298"/>
        <end position="407"/>
    </location>
</feature>
<feature type="modified residue" description="Phosphoserine" evidence="16">
    <location>
        <position position="474"/>
    </location>
</feature>
<feature type="splice variant" id="VSP_042514" description="In isoform 2." evidence="13">
    <original>SYPVDNQ</original>
    <variation>RFSAAQG</variation>
    <location>
        <begin position="275"/>
        <end position="281"/>
    </location>
</feature>
<feature type="splice variant" id="VSP_042515" description="In isoform 2." evidence="13">
    <location>
        <begin position="282"/>
        <end position="498"/>
    </location>
</feature>
<feature type="mutagenesis site" description="Decreased interaction with WAVE complex; when associated with D-51." evidence="10">
    <original>L</original>
    <variation>D</variation>
    <location>
        <position position="40"/>
    </location>
</feature>
<feature type="mutagenesis site" description="Decreased interaction with WAVE complex; when associated with D-54." evidence="10">
    <original>I</original>
    <variation>D</variation>
    <location>
        <position position="50"/>
    </location>
</feature>
<feature type="mutagenesis site" description="Decreased interaction with WAVE complex; when associated with D-40." evidence="10">
    <original>F</original>
    <variation>D</variation>
    <location>
        <position position="51"/>
    </location>
</feature>
<feature type="mutagenesis site" description="Decreased interaction with WAVE complex; when associated with D-50." evidence="10">
    <original>L</original>
    <variation>D</variation>
    <location>
        <position position="54"/>
    </location>
</feature>
<feature type="mutagenesis site" description="Constitutive induction of the formation of actin filaments. Strongly enhances formation of lamellipodia." evidence="7">
    <original>Y</original>
    <variation>D</variation>
    <location>
        <position position="124"/>
    </location>
</feature>
<feature type="mutagenesis site" description="Constitutive induction of the formation of actin filaments. Strongly enhances formation of lamellipodia." evidence="7">
    <original>Y</original>
    <variation>D</variation>
    <location>
        <position position="150"/>
    </location>
</feature>
<feature type="mutagenesis site" description="Constitutive induction of the formation of actin filaments. Strongly enhances formation of lamellipodia." evidence="7">
    <original>WK</original>
    <variation>ED</variation>
    <location>
        <begin position="160"/>
        <end position="161"/>
    </location>
</feature>
<feature type="helix" evidence="17">
    <location>
        <begin position="436"/>
        <end position="446"/>
    </location>
</feature>
<accession>Q9Y6W5</accession>
<accession>B4DZN0</accession>
<accession>O60794</accession>
<accession>Q9UDY7</accession>
<gene>
    <name evidence="15" type="primary">WASF2</name>
    <name evidence="15" type="synonym">WAVE2</name>
</gene>
<dbReference type="EMBL" id="AB026542">
    <property type="protein sequence ID" value="BAA81795.1"/>
    <property type="molecule type" value="mRNA"/>
</dbReference>
<dbReference type="EMBL" id="AK303011">
    <property type="protein sequence ID" value="BAG64142.1"/>
    <property type="molecule type" value="mRNA"/>
</dbReference>
<dbReference type="EMBL" id="AL096774">
    <property type="protein sequence ID" value="CAC18518.1"/>
    <property type="molecule type" value="Genomic_DNA"/>
</dbReference>
<dbReference type="EMBL" id="AL663122">
    <property type="status" value="NOT_ANNOTATED_CDS"/>
    <property type="molecule type" value="Genomic_DNA"/>
</dbReference>
<dbReference type="EMBL" id="BX293535">
    <property type="status" value="NOT_ANNOTATED_CDS"/>
    <property type="molecule type" value="Genomic_DNA"/>
</dbReference>
<dbReference type="EMBL" id="BC040943">
    <property type="protein sequence ID" value="AAH40943.1"/>
    <property type="molecule type" value="mRNA"/>
</dbReference>
<dbReference type="CCDS" id="CCDS304.1">
    <molecule id="Q9Y6W5-1"/>
</dbReference>
<dbReference type="CCDS" id="CCDS55582.1">
    <molecule id="Q9Y6W5-2"/>
</dbReference>
<dbReference type="RefSeq" id="NP_001188333.1">
    <molecule id="Q9Y6W5-2"/>
    <property type="nucleotide sequence ID" value="NM_001201404.3"/>
</dbReference>
<dbReference type="RefSeq" id="NP_008921.1">
    <molecule id="Q9Y6W5-1"/>
    <property type="nucleotide sequence ID" value="NM_006990.5"/>
</dbReference>
<dbReference type="PDB" id="2A40">
    <property type="method" value="X-ray"/>
    <property type="resolution" value="1.80 A"/>
    <property type="chains" value="C/F=433-464"/>
</dbReference>
<dbReference type="PDBsum" id="2A40"/>
<dbReference type="SMR" id="Q9Y6W5"/>
<dbReference type="BioGRID" id="115465">
    <property type="interactions" value="157"/>
</dbReference>
<dbReference type="CORUM" id="Q9Y6W5"/>
<dbReference type="DIP" id="DIP-41817N"/>
<dbReference type="ELM" id="Q9Y6W5"/>
<dbReference type="FunCoup" id="Q9Y6W5">
    <property type="interactions" value="2166"/>
</dbReference>
<dbReference type="IntAct" id="Q9Y6W5">
    <property type="interactions" value="69"/>
</dbReference>
<dbReference type="MINT" id="Q9Y6W5"/>
<dbReference type="STRING" id="9606.ENSP00000483313"/>
<dbReference type="GlyGen" id="Q9Y6W5">
    <property type="glycosylation" value="2 sites, 1 O-linked glycan (1 site)"/>
</dbReference>
<dbReference type="iPTMnet" id="Q9Y6W5"/>
<dbReference type="PhosphoSitePlus" id="Q9Y6W5"/>
<dbReference type="BioMuta" id="WASF2"/>
<dbReference type="DMDM" id="59800456"/>
<dbReference type="jPOST" id="Q9Y6W5"/>
<dbReference type="MassIVE" id="Q9Y6W5"/>
<dbReference type="PaxDb" id="9606-ENSP00000483313"/>
<dbReference type="PeptideAtlas" id="Q9Y6W5"/>
<dbReference type="ProteomicsDB" id="86801">
    <molecule id="Q9Y6W5-1"/>
</dbReference>
<dbReference type="ProteomicsDB" id="86802">
    <molecule id="Q9Y6W5-2"/>
</dbReference>
<dbReference type="Pumba" id="Q9Y6W5"/>
<dbReference type="Antibodypedia" id="30784">
    <property type="antibodies" value="348 antibodies from 32 providers"/>
</dbReference>
<dbReference type="DNASU" id="10163"/>
<dbReference type="Ensembl" id="ENST00000536657.1">
    <molecule id="Q9Y6W5-2"/>
    <property type="protein sequence ID" value="ENSP00000439883.1"/>
    <property type="gene ID" value="ENSG00000158195.11"/>
</dbReference>
<dbReference type="Ensembl" id="ENST00000618852.5">
    <molecule id="Q9Y6W5-1"/>
    <property type="protein sequence ID" value="ENSP00000483313.1"/>
    <property type="gene ID" value="ENSG00000158195.11"/>
</dbReference>
<dbReference type="GeneID" id="10163"/>
<dbReference type="KEGG" id="hsa:10163"/>
<dbReference type="MANE-Select" id="ENST00000618852.5">
    <property type="protein sequence ID" value="ENSP00000483313.1"/>
    <property type="RefSeq nucleotide sequence ID" value="NM_006990.5"/>
    <property type="RefSeq protein sequence ID" value="NP_008921.1"/>
</dbReference>
<dbReference type="UCSC" id="uc057dvq.1">
    <molecule id="Q9Y6W5-1"/>
    <property type="organism name" value="human"/>
</dbReference>
<dbReference type="AGR" id="HGNC:12733"/>
<dbReference type="CTD" id="10163"/>
<dbReference type="DisGeNET" id="10163"/>
<dbReference type="GeneCards" id="WASF2"/>
<dbReference type="HGNC" id="HGNC:12733">
    <property type="gene designation" value="WASF2"/>
</dbReference>
<dbReference type="HPA" id="ENSG00000158195">
    <property type="expression patterns" value="Low tissue specificity"/>
</dbReference>
<dbReference type="MIM" id="605875">
    <property type="type" value="gene"/>
</dbReference>
<dbReference type="neXtProt" id="NX_Q9Y6W5"/>
<dbReference type="OpenTargets" id="ENSG00000158195"/>
<dbReference type="PharmGKB" id="PA37344"/>
<dbReference type="VEuPathDB" id="HostDB:ENSG00000158195"/>
<dbReference type="eggNOG" id="KOG1830">
    <property type="taxonomic scope" value="Eukaryota"/>
</dbReference>
<dbReference type="GeneTree" id="ENSGT00950000182962"/>
<dbReference type="HOGENOM" id="CLU_036022_2_0_1"/>
<dbReference type="InParanoid" id="Q9Y6W5"/>
<dbReference type="OMA" id="PPPDMYN"/>
<dbReference type="OrthoDB" id="1060785at2759"/>
<dbReference type="PAN-GO" id="Q9Y6W5">
    <property type="GO annotations" value="6 GO annotations based on evolutionary models"/>
</dbReference>
<dbReference type="PhylomeDB" id="Q9Y6W5"/>
<dbReference type="TreeFam" id="TF315031"/>
<dbReference type="PathwayCommons" id="Q9Y6W5"/>
<dbReference type="Reactome" id="R-HSA-2029482">
    <property type="pathway name" value="Regulation of actin dynamics for phagocytic cup formation"/>
</dbReference>
<dbReference type="Reactome" id="R-HSA-4420097">
    <property type="pathway name" value="VEGFA-VEGFR2 Pathway"/>
</dbReference>
<dbReference type="Reactome" id="R-HSA-5663213">
    <property type="pathway name" value="RHO GTPases Activate WASPs and WAVEs"/>
</dbReference>
<dbReference type="Reactome" id="R-HSA-9013149">
    <property type="pathway name" value="RAC1 GTPase cycle"/>
</dbReference>
<dbReference type="Reactome" id="R-HSA-9013404">
    <property type="pathway name" value="RAC2 GTPase cycle"/>
</dbReference>
<dbReference type="Reactome" id="R-HSA-9013423">
    <property type="pathway name" value="RAC3 GTPase cycle"/>
</dbReference>
<dbReference type="Reactome" id="R-HSA-9664422">
    <property type="pathway name" value="FCGR3A-mediated phagocytosis"/>
</dbReference>
<dbReference type="SignaLink" id="Q9Y6W5"/>
<dbReference type="SIGNOR" id="Q9Y6W5"/>
<dbReference type="BioGRID-ORCS" id="10163">
    <property type="hits" value="103 hits in 1156 CRISPR screens"/>
</dbReference>
<dbReference type="CD-CODE" id="FB4E32DD">
    <property type="entry name" value="Presynaptic clusters and postsynaptic densities"/>
</dbReference>
<dbReference type="ChiTaRS" id="WASF2">
    <property type="organism name" value="human"/>
</dbReference>
<dbReference type="EvolutionaryTrace" id="Q9Y6W5"/>
<dbReference type="GeneWiki" id="WASF2"/>
<dbReference type="GenomeRNAi" id="10163"/>
<dbReference type="Pharos" id="Q9Y6W5">
    <property type="development level" value="Tbio"/>
</dbReference>
<dbReference type="PRO" id="PR:Q9Y6W5"/>
<dbReference type="Proteomes" id="UP000005640">
    <property type="component" value="Chromosome 1"/>
</dbReference>
<dbReference type="RNAct" id="Q9Y6W5">
    <property type="molecule type" value="protein"/>
</dbReference>
<dbReference type="Bgee" id="ENSG00000158195">
    <property type="expression patterns" value="Expressed in nipple and 200 other cell types or tissues"/>
</dbReference>
<dbReference type="GO" id="GO:0015629">
    <property type="term" value="C:actin cytoskeleton"/>
    <property type="evidence" value="ECO:0000304"/>
    <property type="project" value="ProtInc"/>
</dbReference>
<dbReference type="GO" id="GO:0016323">
    <property type="term" value="C:basolateral plasma membrane"/>
    <property type="evidence" value="ECO:0007669"/>
    <property type="project" value="UniProtKB-SubCell"/>
</dbReference>
<dbReference type="GO" id="GO:0005911">
    <property type="term" value="C:cell-cell junction"/>
    <property type="evidence" value="ECO:0007669"/>
    <property type="project" value="Ensembl"/>
</dbReference>
<dbReference type="GO" id="GO:0005829">
    <property type="term" value="C:cytosol"/>
    <property type="evidence" value="ECO:0000304"/>
    <property type="project" value="Reactome"/>
</dbReference>
<dbReference type="GO" id="GO:0005769">
    <property type="term" value="C:early endosome"/>
    <property type="evidence" value="ECO:0007669"/>
    <property type="project" value="Ensembl"/>
</dbReference>
<dbReference type="GO" id="GO:0070062">
    <property type="term" value="C:extracellular exosome"/>
    <property type="evidence" value="ECO:0007005"/>
    <property type="project" value="UniProtKB"/>
</dbReference>
<dbReference type="GO" id="GO:0030027">
    <property type="term" value="C:lamellipodium"/>
    <property type="evidence" value="ECO:0000314"/>
    <property type="project" value="MGI"/>
</dbReference>
<dbReference type="GO" id="GO:0032991">
    <property type="term" value="C:protein-containing complex"/>
    <property type="evidence" value="ECO:0000314"/>
    <property type="project" value="UniProtKB"/>
</dbReference>
<dbReference type="GO" id="GO:0001726">
    <property type="term" value="C:ruffle"/>
    <property type="evidence" value="ECO:0007669"/>
    <property type="project" value="Ensembl"/>
</dbReference>
<dbReference type="GO" id="GO:0031209">
    <property type="term" value="C:SCAR complex"/>
    <property type="evidence" value="ECO:0000314"/>
    <property type="project" value="UniProtKB"/>
</dbReference>
<dbReference type="GO" id="GO:0045202">
    <property type="term" value="C:synapse"/>
    <property type="evidence" value="ECO:0007669"/>
    <property type="project" value="Ensembl"/>
</dbReference>
<dbReference type="GO" id="GO:0003779">
    <property type="term" value="F:actin binding"/>
    <property type="evidence" value="ECO:0000304"/>
    <property type="project" value="ProtInc"/>
</dbReference>
<dbReference type="GO" id="GO:0071933">
    <property type="term" value="F:Arp2/3 complex binding"/>
    <property type="evidence" value="ECO:0000318"/>
    <property type="project" value="GO_Central"/>
</dbReference>
<dbReference type="GO" id="GO:0045296">
    <property type="term" value="F:cadherin binding"/>
    <property type="evidence" value="ECO:0007005"/>
    <property type="project" value="BHF-UCL"/>
</dbReference>
<dbReference type="GO" id="GO:0051018">
    <property type="term" value="F:protein kinase A binding"/>
    <property type="evidence" value="ECO:0000353"/>
    <property type="project" value="UniProtKB"/>
</dbReference>
<dbReference type="GO" id="GO:0034237">
    <property type="term" value="F:protein kinase A regulatory subunit binding"/>
    <property type="evidence" value="ECO:0000318"/>
    <property type="project" value="GO_Central"/>
</dbReference>
<dbReference type="GO" id="GO:0017124">
    <property type="term" value="F:SH3 domain binding"/>
    <property type="evidence" value="ECO:0000353"/>
    <property type="project" value="UniProtKB"/>
</dbReference>
<dbReference type="GO" id="GO:0030036">
    <property type="term" value="P:actin cytoskeleton organization"/>
    <property type="evidence" value="ECO:0000318"/>
    <property type="project" value="GO_Central"/>
</dbReference>
<dbReference type="GO" id="GO:0030048">
    <property type="term" value="P:actin filament-based movement"/>
    <property type="evidence" value="ECO:0007669"/>
    <property type="project" value="Ensembl"/>
</dbReference>
<dbReference type="GO" id="GO:0007188">
    <property type="term" value="P:adenylate cyclase-modulating G protein-coupled receptor signaling pathway"/>
    <property type="evidence" value="ECO:0000304"/>
    <property type="project" value="ProtInc"/>
</dbReference>
<dbReference type="GO" id="GO:0001667">
    <property type="term" value="P:ameboidal-type cell migration"/>
    <property type="evidence" value="ECO:0007669"/>
    <property type="project" value="Ensembl"/>
</dbReference>
<dbReference type="GO" id="GO:0001525">
    <property type="term" value="P:angiogenesis"/>
    <property type="evidence" value="ECO:0007669"/>
    <property type="project" value="Ensembl"/>
</dbReference>
<dbReference type="GO" id="GO:0006897">
    <property type="term" value="P:endocytosis"/>
    <property type="evidence" value="ECO:0007669"/>
    <property type="project" value="Ensembl"/>
</dbReference>
<dbReference type="GO" id="GO:0030032">
    <property type="term" value="P:lamellipodium assembly"/>
    <property type="evidence" value="ECO:0007669"/>
    <property type="project" value="Ensembl"/>
</dbReference>
<dbReference type="GO" id="GO:0072673">
    <property type="term" value="P:lamellipodium morphogenesis"/>
    <property type="evidence" value="ECO:0007669"/>
    <property type="project" value="Ensembl"/>
</dbReference>
<dbReference type="GO" id="GO:0035855">
    <property type="term" value="P:megakaryocyte development"/>
    <property type="evidence" value="ECO:0007669"/>
    <property type="project" value="Ensembl"/>
</dbReference>
<dbReference type="GO" id="GO:0051497">
    <property type="term" value="P:negative regulation of stress fiber assembly"/>
    <property type="evidence" value="ECO:0000315"/>
    <property type="project" value="UniProtKB"/>
</dbReference>
<dbReference type="GO" id="GO:0001764">
    <property type="term" value="P:neuron migration"/>
    <property type="evidence" value="ECO:0007669"/>
    <property type="project" value="Ensembl"/>
</dbReference>
<dbReference type="GO" id="GO:2000601">
    <property type="term" value="P:positive regulation of Arp2/3 complex-mediated actin nucleation"/>
    <property type="evidence" value="ECO:0000318"/>
    <property type="project" value="GO_Central"/>
</dbReference>
<dbReference type="GO" id="GO:0010592">
    <property type="term" value="P:positive regulation of lamellipodium assembly"/>
    <property type="evidence" value="ECO:0000315"/>
    <property type="project" value="UniProtKB"/>
</dbReference>
<dbReference type="GO" id="GO:0098974">
    <property type="term" value="P:postsynaptic actin cytoskeleton organization"/>
    <property type="evidence" value="ECO:0007669"/>
    <property type="project" value="Ensembl"/>
</dbReference>
<dbReference type="GO" id="GO:0016601">
    <property type="term" value="P:Rac protein signal transduction"/>
    <property type="evidence" value="ECO:0007669"/>
    <property type="project" value="Ensembl"/>
</dbReference>
<dbReference type="FunFam" id="1.20.5.340:FF:000012">
    <property type="entry name" value="Wiskott-Aldrich syndrome protein family member 1"/>
    <property type="match status" value="1"/>
</dbReference>
<dbReference type="Gene3D" id="1.20.5.340">
    <property type="match status" value="1"/>
</dbReference>
<dbReference type="Gene3D" id="6.10.280.150">
    <property type="match status" value="2"/>
</dbReference>
<dbReference type="InterPro" id="IPR028288">
    <property type="entry name" value="SCAR/WAVE_fam"/>
</dbReference>
<dbReference type="InterPro" id="IPR003124">
    <property type="entry name" value="WH2_dom"/>
</dbReference>
<dbReference type="PANTHER" id="PTHR12902">
    <property type="entry name" value="WASP-1"/>
    <property type="match status" value="1"/>
</dbReference>
<dbReference type="PANTHER" id="PTHR12902:SF1">
    <property type="entry name" value="WISKOTT-ALDRICH SYNDROME PROTEIN FAMILY MEMBER"/>
    <property type="match status" value="1"/>
</dbReference>
<dbReference type="Pfam" id="PF02205">
    <property type="entry name" value="WH2"/>
    <property type="match status" value="1"/>
</dbReference>
<dbReference type="SMART" id="SM00246">
    <property type="entry name" value="WH2"/>
    <property type="match status" value="1"/>
</dbReference>
<dbReference type="PROSITE" id="PS51082">
    <property type="entry name" value="WH2"/>
    <property type="match status" value="1"/>
</dbReference>